<proteinExistence type="inferred from homology"/>
<comment type="cofactor">
    <cofactor evidence="1">
        <name>Fe(2+)</name>
        <dbReference type="ChEBI" id="CHEBI:29033"/>
    </cofactor>
    <text evidence="1">Binds 1 Fe(2+) ion per subunit.</text>
</comment>
<comment type="cofactor">
    <cofactor evidence="1">
        <name>L-ascorbate</name>
        <dbReference type="ChEBI" id="CHEBI:38290"/>
    </cofactor>
</comment>
<feature type="chain" id="PRO_1000061714" description="PKHD-type hydroxylase BURPS668_A1690">
    <location>
        <begin position="1"/>
        <end position="227"/>
    </location>
</feature>
<feature type="domain" description="Fe2OG dioxygenase" evidence="1">
    <location>
        <begin position="78"/>
        <end position="178"/>
    </location>
</feature>
<feature type="binding site" evidence="1">
    <location>
        <position position="96"/>
    </location>
    <ligand>
        <name>Fe cation</name>
        <dbReference type="ChEBI" id="CHEBI:24875"/>
    </ligand>
</feature>
<feature type="binding site" evidence="1">
    <location>
        <position position="98"/>
    </location>
    <ligand>
        <name>Fe cation</name>
        <dbReference type="ChEBI" id="CHEBI:24875"/>
    </ligand>
</feature>
<feature type="binding site" evidence="1">
    <location>
        <position position="159"/>
    </location>
    <ligand>
        <name>Fe cation</name>
        <dbReference type="ChEBI" id="CHEBI:24875"/>
    </ligand>
</feature>
<feature type="binding site" evidence="1">
    <location>
        <position position="169"/>
    </location>
    <ligand>
        <name>2-oxoglutarate</name>
        <dbReference type="ChEBI" id="CHEBI:16810"/>
    </ligand>
</feature>
<accession>A3NK14</accession>
<reference key="1">
    <citation type="journal article" date="2010" name="Genome Biol. Evol.">
        <title>Continuing evolution of Burkholderia mallei through genome reduction and large-scale rearrangements.</title>
        <authorList>
            <person name="Losada L."/>
            <person name="Ronning C.M."/>
            <person name="DeShazer D."/>
            <person name="Woods D."/>
            <person name="Fedorova N."/>
            <person name="Kim H.S."/>
            <person name="Shabalina S.A."/>
            <person name="Pearson T.R."/>
            <person name="Brinkac L."/>
            <person name="Tan P."/>
            <person name="Nandi T."/>
            <person name="Crabtree J."/>
            <person name="Badger J."/>
            <person name="Beckstrom-Sternberg S."/>
            <person name="Saqib M."/>
            <person name="Schutzer S.E."/>
            <person name="Keim P."/>
            <person name="Nierman W.C."/>
        </authorList>
    </citation>
    <scope>NUCLEOTIDE SEQUENCE [LARGE SCALE GENOMIC DNA]</scope>
    <source>
        <strain>668</strain>
    </source>
</reference>
<protein>
    <recommendedName>
        <fullName evidence="1">PKHD-type hydroxylase BURPS668_A1690</fullName>
        <ecNumber evidence="1">1.14.11.-</ecNumber>
    </recommendedName>
</protein>
<sequence length="227" mass="24861">MMLHIPGVLTKEQVAQCRDILDAADWTDGNATSGAQSALAKRNRQLPEGSPAARAAGDAIQDALARNALFFSAALPLKVFPPLFNRYAGGDAFGTHVDNAIRLLRGTDFRVRSDLSATLFLEEPEHYDGGELCVEDTYGVHRAKLPAGDMVLYPASSLHHVTPVTRGARVASFFWIQSMVRDDADRTLLYQLDTQIQRLTAEKGGRDASVIALTGIYHNLLRRWADA</sequence>
<keyword id="KW-0223">Dioxygenase</keyword>
<keyword id="KW-0408">Iron</keyword>
<keyword id="KW-0479">Metal-binding</keyword>
<keyword id="KW-0560">Oxidoreductase</keyword>
<keyword id="KW-0847">Vitamin C</keyword>
<organism>
    <name type="scientific">Burkholderia pseudomallei (strain 668)</name>
    <dbReference type="NCBI Taxonomy" id="320373"/>
    <lineage>
        <taxon>Bacteria</taxon>
        <taxon>Pseudomonadati</taxon>
        <taxon>Pseudomonadota</taxon>
        <taxon>Betaproteobacteria</taxon>
        <taxon>Burkholderiales</taxon>
        <taxon>Burkholderiaceae</taxon>
        <taxon>Burkholderia</taxon>
        <taxon>pseudomallei group</taxon>
    </lineage>
</organism>
<name>Y5790_BURP6</name>
<dbReference type="EC" id="1.14.11.-" evidence="1"/>
<dbReference type="EMBL" id="CP000571">
    <property type="protein sequence ID" value="ABN87349.1"/>
    <property type="molecule type" value="Genomic_DNA"/>
</dbReference>
<dbReference type="RefSeq" id="WP_004537446.1">
    <property type="nucleotide sequence ID" value="NC_009075.1"/>
</dbReference>
<dbReference type="SMR" id="A3NK14"/>
<dbReference type="KEGG" id="bpd:BURPS668_A1690"/>
<dbReference type="HOGENOM" id="CLU_106663_0_0_4"/>
<dbReference type="GO" id="GO:0016706">
    <property type="term" value="F:2-oxoglutarate-dependent dioxygenase activity"/>
    <property type="evidence" value="ECO:0007669"/>
    <property type="project" value="UniProtKB-UniRule"/>
</dbReference>
<dbReference type="GO" id="GO:0005506">
    <property type="term" value="F:iron ion binding"/>
    <property type="evidence" value="ECO:0007669"/>
    <property type="project" value="UniProtKB-UniRule"/>
</dbReference>
<dbReference type="GO" id="GO:0031418">
    <property type="term" value="F:L-ascorbic acid binding"/>
    <property type="evidence" value="ECO:0007669"/>
    <property type="project" value="UniProtKB-KW"/>
</dbReference>
<dbReference type="GO" id="GO:0006974">
    <property type="term" value="P:DNA damage response"/>
    <property type="evidence" value="ECO:0007669"/>
    <property type="project" value="TreeGrafter"/>
</dbReference>
<dbReference type="GO" id="GO:0006879">
    <property type="term" value="P:intracellular iron ion homeostasis"/>
    <property type="evidence" value="ECO:0007669"/>
    <property type="project" value="TreeGrafter"/>
</dbReference>
<dbReference type="Gene3D" id="2.60.120.620">
    <property type="entry name" value="q2cbj1_9rhob like domain"/>
    <property type="match status" value="1"/>
</dbReference>
<dbReference type="Gene3D" id="4.10.860.20">
    <property type="entry name" value="Rabenosyn, Rab binding domain"/>
    <property type="match status" value="1"/>
</dbReference>
<dbReference type="HAMAP" id="MF_00657">
    <property type="entry name" value="Hydroxyl_YbiX"/>
    <property type="match status" value="1"/>
</dbReference>
<dbReference type="InterPro" id="IPR005123">
    <property type="entry name" value="Oxoglu/Fe-dep_dioxygenase_dom"/>
</dbReference>
<dbReference type="InterPro" id="IPR041097">
    <property type="entry name" value="PKHD_C"/>
</dbReference>
<dbReference type="InterPro" id="IPR023550">
    <property type="entry name" value="PKHD_hydroxylase"/>
</dbReference>
<dbReference type="InterPro" id="IPR006620">
    <property type="entry name" value="Pro_4_hyd_alph"/>
</dbReference>
<dbReference type="InterPro" id="IPR044862">
    <property type="entry name" value="Pro_4_hyd_alph_FE2OG_OXY"/>
</dbReference>
<dbReference type="NCBIfam" id="NF003973">
    <property type="entry name" value="PRK05467.1-2"/>
    <property type="match status" value="1"/>
</dbReference>
<dbReference type="NCBIfam" id="NF003974">
    <property type="entry name" value="PRK05467.1-3"/>
    <property type="match status" value="1"/>
</dbReference>
<dbReference type="NCBIfam" id="NF003975">
    <property type="entry name" value="PRK05467.1-4"/>
    <property type="match status" value="1"/>
</dbReference>
<dbReference type="PANTHER" id="PTHR41536">
    <property type="entry name" value="PKHD-TYPE HYDROXYLASE YBIX"/>
    <property type="match status" value="1"/>
</dbReference>
<dbReference type="PANTHER" id="PTHR41536:SF1">
    <property type="entry name" value="PKHD-TYPE HYDROXYLASE YBIX"/>
    <property type="match status" value="1"/>
</dbReference>
<dbReference type="Pfam" id="PF13640">
    <property type="entry name" value="2OG-FeII_Oxy_3"/>
    <property type="match status" value="1"/>
</dbReference>
<dbReference type="Pfam" id="PF18331">
    <property type="entry name" value="PKHD_C"/>
    <property type="match status" value="1"/>
</dbReference>
<dbReference type="SMART" id="SM00702">
    <property type="entry name" value="P4Hc"/>
    <property type="match status" value="1"/>
</dbReference>
<dbReference type="SUPFAM" id="SSF51197">
    <property type="entry name" value="Clavaminate synthase-like"/>
    <property type="match status" value="1"/>
</dbReference>
<dbReference type="PROSITE" id="PS51471">
    <property type="entry name" value="FE2OG_OXY"/>
    <property type="match status" value="1"/>
</dbReference>
<gene>
    <name type="ordered locus">BURPS668_A1690</name>
</gene>
<evidence type="ECO:0000255" key="1">
    <source>
        <dbReference type="HAMAP-Rule" id="MF_00657"/>
    </source>
</evidence>